<comment type="function">
    <text evidence="1">Drosulfakinin-0 (DSK 0) plays diverse biological roles including regulating gut muscle contraction in adults but not in larvae.</text>
</comment>
<comment type="subcellular location">
    <subcellularLocation>
        <location evidence="1">Secreted</location>
    </subcellularLocation>
</comment>
<comment type="similarity">
    <text evidence="2">Belongs to the gastrin/cholecystokinin family.</text>
</comment>
<sequence length="141" mass="16154">MGLRSCTHLATLFMTLWALAFCFLVVVPIPAQTTSLQNAKDDRRLQELESKIGAESDQPNANLVGPSFSRFGDRRNQKTISFGRRVPLISRPMIPIELDLLMDNDDERTKAKRFDDYGHMRFGKRGGDDQFDDYGHMRFGR</sequence>
<dbReference type="EMBL" id="EU635461">
    <property type="protein sequence ID" value="ACC99370.1"/>
    <property type="molecule type" value="Genomic_DNA"/>
</dbReference>
<dbReference type="EnsemblMetazoa" id="XM_033308256.1">
    <property type="protein sequence ID" value="XP_033164147.1"/>
    <property type="gene ID" value="LOC117143526"/>
</dbReference>
<dbReference type="Proteomes" id="UP000515162">
    <property type="component" value="Unplaced"/>
</dbReference>
<dbReference type="GO" id="GO:0005576">
    <property type="term" value="C:extracellular region"/>
    <property type="evidence" value="ECO:0007669"/>
    <property type="project" value="UniProtKB-SubCell"/>
</dbReference>
<dbReference type="GO" id="GO:0005179">
    <property type="term" value="F:hormone activity"/>
    <property type="evidence" value="ECO:0007669"/>
    <property type="project" value="UniProtKB-KW"/>
</dbReference>
<dbReference type="GO" id="GO:0007218">
    <property type="term" value="P:neuropeptide signaling pathway"/>
    <property type="evidence" value="ECO:0007669"/>
    <property type="project" value="UniProtKB-KW"/>
</dbReference>
<dbReference type="GO" id="GO:0006939">
    <property type="term" value="P:smooth muscle contraction"/>
    <property type="evidence" value="ECO:0000250"/>
    <property type="project" value="UniProtKB"/>
</dbReference>
<dbReference type="InterPro" id="IPR013152">
    <property type="entry name" value="Gastrin/cholecystokinin_CS"/>
</dbReference>
<dbReference type="InterPro" id="IPR013259">
    <property type="entry name" value="Sulfakinin"/>
</dbReference>
<dbReference type="Pfam" id="PF08257">
    <property type="entry name" value="Sulfakinin"/>
    <property type="match status" value="2"/>
</dbReference>
<dbReference type="PROSITE" id="PS00259">
    <property type="entry name" value="GASTRIN"/>
    <property type="match status" value="2"/>
</dbReference>
<proteinExistence type="evidence at protein level"/>
<protein>
    <recommendedName>
        <fullName evidence="5">Drosulfakinins</fullName>
    </recommendedName>
    <component>
        <recommendedName>
            <fullName evidence="5">Drosulfakinin-0</fullName>
            <shortName evidence="5">DSK-0</shortName>
        </recommendedName>
    </component>
    <component>
        <recommendedName>
            <fullName evidence="5">Drosulfakinin-1</fullName>
        </recommendedName>
        <alternativeName>
            <fullName evidence="5">Drosulfakinin I</fullName>
            <shortName evidence="5">DSK-I</shortName>
        </alternativeName>
    </component>
    <component>
        <recommendedName>
            <fullName evidence="5">Drosulfakinin-2</fullName>
        </recommendedName>
        <alternativeName>
            <fullName evidence="5">Drosulfakinin II</fullName>
            <shortName evidence="5">DSK-II</shortName>
        </alternativeName>
    </component>
</protein>
<gene>
    <name evidence="7" type="primary">Dsk</name>
</gene>
<organism>
    <name type="scientific">Drosophila mauritiana</name>
    <name type="common">Fruit fly</name>
    <dbReference type="NCBI Taxonomy" id="7226"/>
    <lineage>
        <taxon>Eukaryota</taxon>
        <taxon>Metazoa</taxon>
        <taxon>Ecdysozoa</taxon>
        <taxon>Arthropoda</taxon>
        <taxon>Hexapoda</taxon>
        <taxon>Insecta</taxon>
        <taxon>Pterygota</taxon>
        <taxon>Neoptera</taxon>
        <taxon>Endopterygota</taxon>
        <taxon>Diptera</taxon>
        <taxon>Brachycera</taxon>
        <taxon>Muscomorpha</taxon>
        <taxon>Ephydroidea</taxon>
        <taxon>Drosophilidae</taxon>
        <taxon>Drosophila</taxon>
        <taxon>Sophophora</taxon>
    </lineage>
</organism>
<keyword id="KW-0027">Amidation</keyword>
<keyword id="KW-0165">Cleavage on pair of basic residues</keyword>
<keyword id="KW-0372">Hormone</keyword>
<keyword id="KW-0527">Neuropeptide</keyword>
<keyword id="KW-0964">Secreted</keyword>
<keyword id="KW-0732">Signal</keyword>
<keyword id="KW-0765">Sulfation</keyword>
<evidence type="ECO:0000250" key="1">
    <source>
        <dbReference type="UniProtKB" id="P09040"/>
    </source>
</evidence>
<evidence type="ECO:0000255" key="2"/>
<evidence type="ECO:0000256" key="3">
    <source>
        <dbReference type="SAM" id="MobiDB-lite"/>
    </source>
</evidence>
<evidence type="ECO:0000269" key="4">
    <source>
    </source>
</evidence>
<evidence type="ECO:0000303" key="5">
    <source>
    </source>
</evidence>
<evidence type="ECO:0000305" key="6"/>
<evidence type="ECO:0000312" key="7">
    <source>
        <dbReference type="EMBL" id="ACC99370.1"/>
    </source>
</evidence>
<accession>B2ZB96</accession>
<feature type="signal peptide" evidence="2">
    <location>
        <begin position="1"/>
        <end position="33"/>
    </location>
</feature>
<feature type="propeptide" id="PRO_0000351165" evidence="4">
    <location>
        <begin position="34"/>
        <end position="73"/>
    </location>
</feature>
<feature type="peptide" id="PRO_0000351166" description="Drosulfakinin-0" evidence="2 5">
    <location>
        <begin position="76"/>
        <end position="82"/>
    </location>
</feature>
<feature type="propeptide" id="PRO_0000351167" evidence="4">
    <location>
        <begin position="86"/>
        <end position="111"/>
    </location>
</feature>
<feature type="peptide" id="PRO_0000351168" description="Drosulfakinin-1" evidence="2 5">
    <location>
        <begin position="114"/>
        <end position="122"/>
    </location>
</feature>
<feature type="peptide" id="PRO_0000351169" description="Drosulfakinin-2" evidence="1">
    <location>
        <begin position="126"/>
        <end position="139"/>
    </location>
</feature>
<feature type="region of interest" description="Disordered" evidence="3">
    <location>
        <begin position="51"/>
        <end position="72"/>
    </location>
</feature>
<feature type="modified residue" description="Phenylalanine amide" evidence="2 5">
    <location>
        <position position="82"/>
    </location>
</feature>
<feature type="modified residue" description="Sulfotyrosine" evidence="2 5">
    <location>
        <position position="117"/>
    </location>
</feature>
<feature type="modified residue" description="Phenylalanine amide" evidence="2 5">
    <location>
        <position position="122"/>
    </location>
</feature>
<feature type="modified residue" description="Sulfotyrosine" evidence="1">
    <location>
        <position position="134"/>
    </location>
</feature>
<feature type="modified residue" description="Phenylalanine amide" evidence="1">
    <location>
        <position position="139"/>
    </location>
</feature>
<reference evidence="7" key="1">
    <citation type="submission" date="2008-04" db="EMBL/GenBank/DDBJ databases">
        <title>A molecular phylogeny for the Drosophila melanogaster subgroup.</title>
        <authorList>
            <person name="Ke F."/>
        </authorList>
    </citation>
    <scope>NUCLEOTIDE SEQUENCE [GENOMIC DNA]</scope>
</reference>
<reference evidence="6" key="2">
    <citation type="journal article" date="2007" name="J. Insect Physiol.">
        <title>The drosulfakinin 0 (DSK 0) peptide encoded in the conserved Dsk gene affects adult Drosophila melanogaster crop contractions.</title>
        <authorList>
            <person name="Palmer G.C."/>
            <person name="Tran T."/>
            <person name="Duttlinger A."/>
            <person name="Nichols R."/>
        </authorList>
    </citation>
    <scope>IDENTIFICATION</scope>
    <scope>AMIDATION AT PHE-82 AND PHE-122</scope>
    <scope>SULFATION AT TYR-117</scope>
</reference>
<name>DSK_DROMA</name>